<dbReference type="EC" id="2.1.2.10" evidence="1"/>
<dbReference type="EMBL" id="CP000083">
    <property type="protein sequence ID" value="AAZ28390.1"/>
    <property type="molecule type" value="Genomic_DNA"/>
</dbReference>
<dbReference type="RefSeq" id="WP_011042111.1">
    <property type="nucleotide sequence ID" value="NC_003910.7"/>
</dbReference>
<dbReference type="SMR" id="Q486J8"/>
<dbReference type="STRING" id="167879.CPS_1274"/>
<dbReference type="KEGG" id="cps:CPS_1274"/>
<dbReference type="eggNOG" id="COG0404">
    <property type="taxonomic scope" value="Bacteria"/>
</dbReference>
<dbReference type="HOGENOM" id="CLU_007884_10_2_6"/>
<dbReference type="Proteomes" id="UP000000547">
    <property type="component" value="Chromosome"/>
</dbReference>
<dbReference type="GO" id="GO:0005829">
    <property type="term" value="C:cytosol"/>
    <property type="evidence" value="ECO:0007669"/>
    <property type="project" value="TreeGrafter"/>
</dbReference>
<dbReference type="GO" id="GO:0005960">
    <property type="term" value="C:glycine cleavage complex"/>
    <property type="evidence" value="ECO:0007669"/>
    <property type="project" value="InterPro"/>
</dbReference>
<dbReference type="GO" id="GO:0004047">
    <property type="term" value="F:aminomethyltransferase activity"/>
    <property type="evidence" value="ECO:0007669"/>
    <property type="project" value="UniProtKB-UniRule"/>
</dbReference>
<dbReference type="GO" id="GO:0008483">
    <property type="term" value="F:transaminase activity"/>
    <property type="evidence" value="ECO:0007669"/>
    <property type="project" value="UniProtKB-KW"/>
</dbReference>
<dbReference type="GO" id="GO:0019464">
    <property type="term" value="P:glycine decarboxylation via glycine cleavage system"/>
    <property type="evidence" value="ECO:0007669"/>
    <property type="project" value="UniProtKB-UniRule"/>
</dbReference>
<dbReference type="FunFam" id="3.30.70.1400:FF:000001">
    <property type="entry name" value="Aminomethyltransferase"/>
    <property type="match status" value="1"/>
</dbReference>
<dbReference type="FunFam" id="4.10.1250.10:FF:000001">
    <property type="entry name" value="Aminomethyltransferase"/>
    <property type="match status" value="1"/>
</dbReference>
<dbReference type="Gene3D" id="2.40.30.110">
    <property type="entry name" value="Aminomethyltransferase beta-barrel domains"/>
    <property type="match status" value="1"/>
</dbReference>
<dbReference type="Gene3D" id="3.30.70.1400">
    <property type="entry name" value="Aminomethyltransferase beta-barrel domains"/>
    <property type="match status" value="1"/>
</dbReference>
<dbReference type="Gene3D" id="4.10.1250.10">
    <property type="entry name" value="Aminomethyltransferase fragment"/>
    <property type="match status" value="1"/>
</dbReference>
<dbReference type="Gene3D" id="3.30.1360.120">
    <property type="entry name" value="Probable tRNA modification gtpase trme, domain 1"/>
    <property type="match status" value="1"/>
</dbReference>
<dbReference type="HAMAP" id="MF_00259">
    <property type="entry name" value="GcvT"/>
    <property type="match status" value="1"/>
</dbReference>
<dbReference type="InterPro" id="IPR006223">
    <property type="entry name" value="GCS_T"/>
</dbReference>
<dbReference type="InterPro" id="IPR022903">
    <property type="entry name" value="GCS_T_bac"/>
</dbReference>
<dbReference type="InterPro" id="IPR013977">
    <property type="entry name" value="GCST_C"/>
</dbReference>
<dbReference type="InterPro" id="IPR006222">
    <property type="entry name" value="GCV_T_N"/>
</dbReference>
<dbReference type="InterPro" id="IPR028896">
    <property type="entry name" value="GcvT/YgfZ/DmdA"/>
</dbReference>
<dbReference type="InterPro" id="IPR029043">
    <property type="entry name" value="GcvT/YgfZ_C"/>
</dbReference>
<dbReference type="InterPro" id="IPR027266">
    <property type="entry name" value="TrmE/GcvT_dom1"/>
</dbReference>
<dbReference type="NCBIfam" id="TIGR00528">
    <property type="entry name" value="gcvT"/>
    <property type="match status" value="1"/>
</dbReference>
<dbReference type="NCBIfam" id="NF001567">
    <property type="entry name" value="PRK00389.1"/>
    <property type="match status" value="1"/>
</dbReference>
<dbReference type="PANTHER" id="PTHR43757">
    <property type="entry name" value="AMINOMETHYLTRANSFERASE"/>
    <property type="match status" value="1"/>
</dbReference>
<dbReference type="PANTHER" id="PTHR43757:SF2">
    <property type="entry name" value="AMINOMETHYLTRANSFERASE, MITOCHONDRIAL"/>
    <property type="match status" value="1"/>
</dbReference>
<dbReference type="Pfam" id="PF01571">
    <property type="entry name" value="GCV_T"/>
    <property type="match status" value="1"/>
</dbReference>
<dbReference type="Pfam" id="PF08669">
    <property type="entry name" value="GCV_T_C"/>
    <property type="match status" value="1"/>
</dbReference>
<dbReference type="PIRSF" id="PIRSF006487">
    <property type="entry name" value="GcvT"/>
    <property type="match status" value="1"/>
</dbReference>
<dbReference type="SUPFAM" id="SSF101790">
    <property type="entry name" value="Aminomethyltransferase beta-barrel domain"/>
    <property type="match status" value="1"/>
</dbReference>
<dbReference type="SUPFAM" id="SSF103025">
    <property type="entry name" value="Folate-binding domain"/>
    <property type="match status" value="1"/>
</dbReference>
<name>GCST_COLP3</name>
<organism>
    <name type="scientific">Colwellia psychrerythraea (strain 34H / ATCC BAA-681)</name>
    <name type="common">Vibrio psychroerythus</name>
    <dbReference type="NCBI Taxonomy" id="167879"/>
    <lineage>
        <taxon>Bacteria</taxon>
        <taxon>Pseudomonadati</taxon>
        <taxon>Pseudomonadota</taxon>
        <taxon>Gammaproteobacteria</taxon>
        <taxon>Alteromonadales</taxon>
        <taxon>Colwelliaceae</taxon>
        <taxon>Colwellia</taxon>
    </lineage>
</organism>
<gene>
    <name evidence="1" type="primary">gcvT</name>
    <name type="ordered locus">CPS_1274</name>
</gene>
<sequence length="362" mass="39590">MTNKTVLHAKHLASGAKMVDFFGWDMPINYGSQIEEHHAVRTDAGMFDVSHMTIVDVQGADAKAFLRRLVINDVAKLATPGKALYTGMLNEEGGVIDDLIIYFFSDTDYRLVVNSATRVKDLAWMTKQSTGFDITITERPEFGMLAVQGPEAKAKVAKLLTAEQIEAVEGMKPFFGVQVGDLFIATTGYTGEDGYEIIVPNNSAEDFWQKLLDEGVVPCGLGARDTLRLEAGMNLYGLDMDETVSPLAANMAWTISWEPTDRDFIGRDVLTAQKAAGDQPKLVGLVLEAKGVLRSHQVVVTEFGNGEITSGTFSPTLGHSVALARVPRSVKVGDTIEVEMRKKLIKVQVTKPSFVRNGKKVF</sequence>
<comment type="function">
    <text evidence="1">The glycine cleavage system catalyzes the degradation of glycine.</text>
</comment>
<comment type="catalytic activity">
    <reaction evidence="1">
        <text>N(6)-[(R)-S(8)-aminomethyldihydrolipoyl]-L-lysyl-[protein] + (6S)-5,6,7,8-tetrahydrofolate = N(6)-[(R)-dihydrolipoyl]-L-lysyl-[protein] + (6R)-5,10-methylene-5,6,7,8-tetrahydrofolate + NH4(+)</text>
        <dbReference type="Rhea" id="RHEA:16945"/>
        <dbReference type="Rhea" id="RHEA-COMP:10475"/>
        <dbReference type="Rhea" id="RHEA-COMP:10492"/>
        <dbReference type="ChEBI" id="CHEBI:15636"/>
        <dbReference type="ChEBI" id="CHEBI:28938"/>
        <dbReference type="ChEBI" id="CHEBI:57453"/>
        <dbReference type="ChEBI" id="CHEBI:83100"/>
        <dbReference type="ChEBI" id="CHEBI:83143"/>
        <dbReference type="EC" id="2.1.2.10"/>
    </reaction>
</comment>
<comment type="subunit">
    <text evidence="1">The glycine cleavage system is composed of four proteins: P, T, L and H.</text>
</comment>
<comment type="similarity">
    <text evidence="1">Belongs to the GcvT family.</text>
</comment>
<protein>
    <recommendedName>
        <fullName evidence="1">Aminomethyltransferase</fullName>
        <ecNumber evidence="1">2.1.2.10</ecNumber>
    </recommendedName>
    <alternativeName>
        <fullName evidence="1">Glycine cleavage system T protein</fullName>
    </alternativeName>
</protein>
<feature type="chain" id="PRO_1000047659" description="Aminomethyltransferase">
    <location>
        <begin position="1"/>
        <end position="362"/>
    </location>
</feature>
<reference key="1">
    <citation type="journal article" date="2005" name="Proc. Natl. Acad. Sci. U.S.A.">
        <title>The psychrophilic lifestyle as revealed by the genome sequence of Colwellia psychrerythraea 34H through genomic and proteomic analyses.</title>
        <authorList>
            <person name="Methe B.A."/>
            <person name="Nelson K.E."/>
            <person name="Deming J.W."/>
            <person name="Momen B."/>
            <person name="Melamud E."/>
            <person name="Zhang X."/>
            <person name="Moult J."/>
            <person name="Madupu R."/>
            <person name="Nelson W.C."/>
            <person name="Dodson R.J."/>
            <person name="Brinkac L.M."/>
            <person name="Daugherty S.C."/>
            <person name="Durkin A.S."/>
            <person name="DeBoy R.T."/>
            <person name="Kolonay J.F."/>
            <person name="Sullivan S.A."/>
            <person name="Zhou L."/>
            <person name="Davidsen T.M."/>
            <person name="Wu M."/>
            <person name="Huston A.L."/>
            <person name="Lewis M."/>
            <person name="Weaver B."/>
            <person name="Weidman J.F."/>
            <person name="Khouri H."/>
            <person name="Utterback T.R."/>
            <person name="Feldblyum T.V."/>
            <person name="Fraser C.M."/>
        </authorList>
    </citation>
    <scope>NUCLEOTIDE SEQUENCE [LARGE SCALE GENOMIC DNA]</scope>
    <source>
        <strain>34H / ATCC BAA-681</strain>
    </source>
</reference>
<accession>Q486J8</accession>
<evidence type="ECO:0000255" key="1">
    <source>
        <dbReference type="HAMAP-Rule" id="MF_00259"/>
    </source>
</evidence>
<proteinExistence type="inferred from homology"/>
<keyword id="KW-0032">Aminotransferase</keyword>
<keyword id="KW-0808">Transferase</keyword>